<proteinExistence type="inferred from homology"/>
<gene>
    <name evidence="1" type="primary">hemL</name>
    <name type="ordered locus">Cbei_1288</name>
</gene>
<dbReference type="EC" id="5.4.3.8" evidence="1"/>
<dbReference type="EMBL" id="CP000721">
    <property type="protein sequence ID" value="ABR33468.1"/>
    <property type="molecule type" value="Genomic_DNA"/>
</dbReference>
<dbReference type="RefSeq" id="WP_011968622.1">
    <property type="nucleotide sequence ID" value="NC_009617.1"/>
</dbReference>
<dbReference type="SMR" id="A6LSY8"/>
<dbReference type="KEGG" id="cbe:Cbei_1288"/>
<dbReference type="eggNOG" id="COG0001">
    <property type="taxonomic scope" value="Bacteria"/>
</dbReference>
<dbReference type="HOGENOM" id="CLU_016922_1_5_9"/>
<dbReference type="UniPathway" id="UPA00251">
    <property type="reaction ID" value="UER00317"/>
</dbReference>
<dbReference type="Proteomes" id="UP000000565">
    <property type="component" value="Chromosome"/>
</dbReference>
<dbReference type="GO" id="GO:0005737">
    <property type="term" value="C:cytoplasm"/>
    <property type="evidence" value="ECO:0007669"/>
    <property type="project" value="UniProtKB-SubCell"/>
</dbReference>
<dbReference type="GO" id="GO:0042286">
    <property type="term" value="F:glutamate-1-semialdehyde 2,1-aminomutase activity"/>
    <property type="evidence" value="ECO:0007669"/>
    <property type="project" value="UniProtKB-UniRule"/>
</dbReference>
<dbReference type="GO" id="GO:0030170">
    <property type="term" value="F:pyridoxal phosphate binding"/>
    <property type="evidence" value="ECO:0007669"/>
    <property type="project" value="InterPro"/>
</dbReference>
<dbReference type="GO" id="GO:0008483">
    <property type="term" value="F:transaminase activity"/>
    <property type="evidence" value="ECO:0007669"/>
    <property type="project" value="InterPro"/>
</dbReference>
<dbReference type="GO" id="GO:0006782">
    <property type="term" value="P:protoporphyrinogen IX biosynthetic process"/>
    <property type="evidence" value="ECO:0007669"/>
    <property type="project" value="UniProtKB-UniRule"/>
</dbReference>
<dbReference type="CDD" id="cd00610">
    <property type="entry name" value="OAT_like"/>
    <property type="match status" value="1"/>
</dbReference>
<dbReference type="FunFam" id="3.40.640.10:FF:000021">
    <property type="entry name" value="Glutamate-1-semialdehyde 2,1-aminomutase"/>
    <property type="match status" value="1"/>
</dbReference>
<dbReference type="Gene3D" id="3.90.1150.10">
    <property type="entry name" value="Aspartate Aminotransferase, domain 1"/>
    <property type="match status" value="1"/>
</dbReference>
<dbReference type="Gene3D" id="3.40.640.10">
    <property type="entry name" value="Type I PLP-dependent aspartate aminotransferase-like (Major domain)"/>
    <property type="match status" value="1"/>
</dbReference>
<dbReference type="HAMAP" id="MF_00375">
    <property type="entry name" value="HemL_aminotrans_3"/>
    <property type="match status" value="1"/>
</dbReference>
<dbReference type="InterPro" id="IPR004639">
    <property type="entry name" value="4pyrrol_synth_GluAld_NH2Trfase"/>
</dbReference>
<dbReference type="InterPro" id="IPR005814">
    <property type="entry name" value="Aminotrans_3"/>
</dbReference>
<dbReference type="InterPro" id="IPR049704">
    <property type="entry name" value="Aminotrans_3_PPA_site"/>
</dbReference>
<dbReference type="InterPro" id="IPR015424">
    <property type="entry name" value="PyrdxlP-dep_Trfase"/>
</dbReference>
<dbReference type="InterPro" id="IPR015421">
    <property type="entry name" value="PyrdxlP-dep_Trfase_major"/>
</dbReference>
<dbReference type="InterPro" id="IPR015422">
    <property type="entry name" value="PyrdxlP-dep_Trfase_small"/>
</dbReference>
<dbReference type="NCBIfam" id="TIGR00713">
    <property type="entry name" value="hemL"/>
    <property type="match status" value="1"/>
</dbReference>
<dbReference type="NCBIfam" id="NF000818">
    <property type="entry name" value="PRK00062.1"/>
    <property type="match status" value="1"/>
</dbReference>
<dbReference type="PANTHER" id="PTHR43713">
    <property type="entry name" value="GLUTAMATE-1-SEMIALDEHYDE 2,1-AMINOMUTASE"/>
    <property type="match status" value="1"/>
</dbReference>
<dbReference type="PANTHER" id="PTHR43713:SF3">
    <property type="entry name" value="GLUTAMATE-1-SEMIALDEHYDE 2,1-AMINOMUTASE 1, CHLOROPLASTIC-RELATED"/>
    <property type="match status" value="1"/>
</dbReference>
<dbReference type="Pfam" id="PF00202">
    <property type="entry name" value="Aminotran_3"/>
    <property type="match status" value="1"/>
</dbReference>
<dbReference type="SUPFAM" id="SSF53383">
    <property type="entry name" value="PLP-dependent transferases"/>
    <property type="match status" value="1"/>
</dbReference>
<dbReference type="PROSITE" id="PS00600">
    <property type="entry name" value="AA_TRANSFER_CLASS_3"/>
    <property type="match status" value="1"/>
</dbReference>
<name>GSA_CLOB8</name>
<reference key="1">
    <citation type="submission" date="2007-06" db="EMBL/GenBank/DDBJ databases">
        <title>Complete sequence of Clostridium beijerinckii NCIMB 8052.</title>
        <authorList>
            <consortium name="US DOE Joint Genome Institute"/>
            <person name="Copeland A."/>
            <person name="Lucas S."/>
            <person name="Lapidus A."/>
            <person name="Barry K."/>
            <person name="Detter J.C."/>
            <person name="Glavina del Rio T."/>
            <person name="Hammon N."/>
            <person name="Israni S."/>
            <person name="Dalin E."/>
            <person name="Tice H."/>
            <person name="Pitluck S."/>
            <person name="Sims D."/>
            <person name="Brettin T."/>
            <person name="Bruce D."/>
            <person name="Tapia R."/>
            <person name="Brainard J."/>
            <person name="Schmutz J."/>
            <person name="Larimer F."/>
            <person name="Land M."/>
            <person name="Hauser L."/>
            <person name="Kyrpides N."/>
            <person name="Mikhailova N."/>
            <person name="Bennet G."/>
            <person name="Cann I."/>
            <person name="Chen J.-S."/>
            <person name="Contreras A.L."/>
            <person name="Jones D."/>
            <person name="Kashket E."/>
            <person name="Mitchell W."/>
            <person name="Stoddard S."/>
            <person name="Schwarz W."/>
            <person name="Qureshi N."/>
            <person name="Young M."/>
            <person name="Shi Z."/>
            <person name="Ezeji T."/>
            <person name="White B."/>
            <person name="Blaschek H."/>
            <person name="Richardson P."/>
        </authorList>
    </citation>
    <scope>NUCLEOTIDE SEQUENCE [LARGE SCALE GENOMIC DNA]</scope>
    <source>
        <strain>ATCC 51743 / NCIMB 8052</strain>
    </source>
</reference>
<accession>A6LSY8</accession>
<protein>
    <recommendedName>
        <fullName evidence="1">Glutamate-1-semialdehyde 2,1-aminomutase</fullName>
        <shortName evidence="1">GSA</shortName>
        <ecNumber evidence="1">5.4.3.8</ecNumber>
    </recommendedName>
    <alternativeName>
        <fullName evidence="1">Glutamate-1-semialdehyde aminotransferase</fullName>
        <shortName evidence="1">GSA-AT</shortName>
    </alternativeName>
</protein>
<organism>
    <name type="scientific">Clostridium beijerinckii (strain ATCC 51743 / NCIMB 8052)</name>
    <name type="common">Clostridium acetobutylicum</name>
    <dbReference type="NCBI Taxonomy" id="290402"/>
    <lineage>
        <taxon>Bacteria</taxon>
        <taxon>Bacillati</taxon>
        <taxon>Bacillota</taxon>
        <taxon>Clostridia</taxon>
        <taxon>Eubacteriales</taxon>
        <taxon>Clostridiaceae</taxon>
        <taxon>Clostridium</taxon>
    </lineage>
</organism>
<feature type="chain" id="PRO_1000079917" description="Glutamate-1-semialdehyde 2,1-aminomutase">
    <location>
        <begin position="1"/>
        <end position="431"/>
    </location>
</feature>
<feature type="modified residue" description="N6-(pyridoxal phosphate)lysine" evidence="1">
    <location>
        <position position="264"/>
    </location>
</feature>
<sequence length="431" mass="47639">MKNVDIFKESEEYMPGGVNSPVRAFKGVNLNPPIIKSGKGVIIKDEEDNEYIDFVLAWGPLILGHCDDDVVEAIKEVSSMALAFGAPTKLELDLAKFICTNLDNVEMIRMVNSGTEATMSAVKLARGYTKRKRIVKFAGCYHGHFDGFLIEAGSGVMTGGIPGSLGVPNESIENTLIGIYNDKEQITELFKKYGNEIAGVIIEPVAGNMGVIKSENDFMETLRDLCNQYGSLLIFDEVMSGFRVAFKGAQSLFNVKPDLVTYAKIMGGGLPCGAYGGRKEIMKNLSPLGGVYQAGTMSGNPIVMAAGIATLNKLKNNQNYYDHIENIGARLEEGIINISKKYDLPVVMNRVGGMMTLFFNDLKEVRTYDDVKKCDVNRFNRYFEHMLKSGFNLPPSQFEALFLSVQHKESHIDAFLKAFEEFALNENKMSL</sequence>
<keyword id="KW-0963">Cytoplasm</keyword>
<keyword id="KW-0413">Isomerase</keyword>
<keyword id="KW-0627">Porphyrin biosynthesis</keyword>
<keyword id="KW-0663">Pyridoxal phosphate</keyword>
<comment type="catalytic activity">
    <reaction evidence="1">
        <text>(S)-4-amino-5-oxopentanoate = 5-aminolevulinate</text>
        <dbReference type="Rhea" id="RHEA:14265"/>
        <dbReference type="ChEBI" id="CHEBI:57501"/>
        <dbReference type="ChEBI" id="CHEBI:356416"/>
        <dbReference type="EC" id="5.4.3.8"/>
    </reaction>
</comment>
<comment type="cofactor">
    <cofactor evidence="1">
        <name>pyridoxal 5'-phosphate</name>
        <dbReference type="ChEBI" id="CHEBI:597326"/>
    </cofactor>
</comment>
<comment type="pathway">
    <text evidence="1">Porphyrin-containing compound metabolism; protoporphyrin-IX biosynthesis; 5-aminolevulinate from L-glutamyl-tRNA(Glu): step 2/2.</text>
</comment>
<comment type="subunit">
    <text evidence="1">Homodimer.</text>
</comment>
<comment type="subcellular location">
    <subcellularLocation>
        <location evidence="1">Cytoplasm</location>
    </subcellularLocation>
</comment>
<comment type="similarity">
    <text evidence="1">Belongs to the class-III pyridoxal-phosphate-dependent aminotransferase family. HemL subfamily.</text>
</comment>
<evidence type="ECO:0000255" key="1">
    <source>
        <dbReference type="HAMAP-Rule" id="MF_00375"/>
    </source>
</evidence>